<name>INV5_YEASX</name>
<keyword id="KW-0325">Glycoprotein</keyword>
<keyword id="KW-0326">Glycosidase</keyword>
<keyword id="KW-0378">Hydrolase</keyword>
<keyword id="KW-0732">Signal</keyword>
<sequence length="74" mass="8650">MLLQAFIFLLAGFAAKISALMTNETSDRPLVHFTPNKGWMNDPNGLWYDAKEGKWHLYFQYNPNDTVWGLPLFW</sequence>
<protein>
    <recommendedName>
        <fullName>Invertase 5</fullName>
        <ecNumber>3.2.1.26</ecNumber>
    </recommendedName>
    <alternativeName>
        <fullName>Beta-fructofuranosidase 5</fullName>
    </alternativeName>
    <alternativeName>
        <fullName>Saccharase</fullName>
    </alternativeName>
</protein>
<gene>
    <name type="primary">SUC5</name>
</gene>
<evidence type="ECO:0000250" key="1"/>
<evidence type="ECO:0000255" key="2"/>
<evidence type="ECO:0000255" key="3">
    <source>
        <dbReference type="PROSITE-ProRule" id="PRU10067"/>
    </source>
</evidence>
<evidence type="ECO:0000305" key="4"/>
<accession>P10597</accession>
<feature type="signal peptide">
    <location>
        <begin position="1"/>
        <end position="19"/>
    </location>
</feature>
<feature type="chain" id="PRO_0000033403" description="Invertase 5">
    <location>
        <begin position="20"/>
        <end position="74" status="greater than"/>
    </location>
</feature>
<feature type="active site" evidence="3">
    <location>
        <position position="42"/>
    </location>
</feature>
<feature type="binding site" evidence="1">
    <location>
        <begin position="39"/>
        <end position="42"/>
    </location>
    <ligand>
        <name>substrate</name>
    </ligand>
</feature>
<feature type="binding site" evidence="1">
    <location>
        <position position="60"/>
    </location>
    <ligand>
        <name>substrate</name>
    </ligand>
</feature>
<feature type="glycosylation site" description="N-linked (GlcNAc...) asparagine" evidence="2">
    <location>
        <position position="23"/>
    </location>
</feature>
<feature type="glycosylation site" description="N-linked (GlcNAc...) asparagine" evidence="2">
    <location>
        <position position="64"/>
    </location>
</feature>
<feature type="non-terminal residue">
    <location>
        <position position="74"/>
    </location>
</feature>
<comment type="catalytic activity">
    <reaction evidence="3">
        <text>Hydrolysis of terminal non-reducing beta-D-fructofuranoside residues in beta-D-fructofuranosides.</text>
        <dbReference type="EC" id="3.2.1.26"/>
    </reaction>
</comment>
<comment type="similarity">
    <text evidence="4">Belongs to the glycosyl hydrolase 32 family.</text>
</comment>
<comment type="sequence caution" evidence="4">
    <conflict type="erroneous initiation">
        <sequence resource="EMBL-CDS" id="AAA35128"/>
    </conflict>
</comment>
<organism>
    <name type="scientific">Saccharomyces cerevisiae</name>
    <name type="common">Baker's yeast</name>
    <dbReference type="NCBI Taxonomy" id="4932"/>
    <lineage>
        <taxon>Eukaryota</taxon>
        <taxon>Fungi</taxon>
        <taxon>Dikarya</taxon>
        <taxon>Ascomycota</taxon>
        <taxon>Saccharomycotina</taxon>
        <taxon>Saccharomycetes</taxon>
        <taxon>Saccharomycetales</taxon>
        <taxon>Saccharomycetaceae</taxon>
        <taxon>Saccharomyces</taxon>
    </lineage>
</organism>
<dbReference type="EC" id="3.2.1.26"/>
<dbReference type="EMBL" id="X07573">
    <property type="protein sequence ID" value="CAA30460.1"/>
    <property type="molecule type" value="Genomic_DNA"/>
</dbReference>
<dbReference type="EMBL" id="K03294">
    <property type="protein sequence ID" value="AAA35128.1"/>
    <property type="status" value="ALT_INIT"/>
    <property type="molecule type" value="Genomic_DNA"/>
</dbReference>
<dbReference type="PIR" id="S25439">
    <property type="entry name" value="S25439"/>
</dbReference>
<dbReference type="SMR" id="P10597"/>
<dbReference type="CAZy" id="GH32">
    <property type="family name" value="Glycoside Hydrolase Family 32"/>
</dbReference>
<dbReference type="GlyCosmos" id="P10597">
    <property type="glycosylation" value="2 sites, No reported glycans"/>
</dbReference>
<dbReference type="SGD" id="S000029534">
    <property type="gene designation" value="SUC5"/>
</dbReference>
<dbReference type="VEuPathDB" id="FungiDB:YIL162W"/>
<dbReference type="GO" id="GO:0005576">
    <property type="term" value="C:extracellular region"/>
    <property type="evidence" value="ECO:0000305"/>
    <property type="project" value="SGD"/>
</dbReference>
<dbReference type="GO" id="GO:0000324">
    <property type="term" value="C:fungal-type vacuole"/>
    <property type="evidence" value="ECO:0007669"/>
    <property type="project" value="TreeGrafter"/>
</dbReference>
<dbReference type="GO" id="GO:0004564">
    <property type="term" value="F:beta-fructofuranosidase activity"/>
    <property type="evidence" value="ECO:0000314"/>
    <property type="project" value="SGD"/>
</dbReference>
<dbReference type="GO" id="GO:0004575">
    <property type="term" value="F:sucrose alpha-glucosidase activity"/>
    <property type="evidence" value="ECO:0007669"/>
    <property type="project" value="TreeGrafter"/>
</dbReference>
<dbReference type="GO" id="GO:0036008">
    <property type="term" value="P:sucrose catabolic process to fructose-6-phosphate and glucose-6-phosphate"/>
    <property type="evidence" value="ECO:0000314"/>
    <property type="project" value="SGD"/>
</dbReference>
<dbReference type="Gene3D" id="2.115.10.20">
    <property type="entry name" value="Glycosyl hydrolase domain, family 43"/>
    <property type="match status" value="1"/>
</dbReference>
<dbReference type="InterPro" id="IPR018053">
    <property type="entry name" value="Glyco_hydro_32_AS"/>
</dbReference>
<dbReference type="InterPro" id="IPR013148">
    <property type="entry name" value="Glyco_hydro_32_N"/>
</dbReference>
<dbReference type="InterPro" id="IPR023296">
    <property type="entry name" value="Glyco_hydro_beta-prop_sf"/>
</dbReference>
<dbReference type="PANTHER" id="PTHR42800">
    <property type="entry name" value="EXOINULINASE INUD (AFU_ORTHOLOGUE AFUA_5G00480)"/>
    <property type="match status" value="1"/>
</dbReference>
<dbReference type="PANTHER" id="PTHR42800:SF4">
    <property type="entry name" value="INVERTASE 2"/>
    <property type="match status" value="1"/>
</dbReference>
<dbReference type="Pfam" id="PF00251">
    <property type="entry name" value="Glyco_hydro_32N"/>
    <property type="match status" value="1"/>
</dbReference>
<dbReference type="SUPFAM" id="SSF75005">
    <property type="entry name" value="Arabinanase/levansucrase/invertase"/>
    <property type="match status" value="1"/>
</dbReference>
<dbReference type="PROSITE" id="PS00609">
    <property type="entry name" value="GLYCOSYL_HYDROL_F32"/>
    <property type="match status" value="1"/>
</dbReference>
<reference key="1">
    <citation type="journal article" date="1988" name="Mol. Gen. Genet.">
        <title>Structural analysis of the 5' regions of yeast SUC genes revealed analogous palindromes in SUC, MAL and GAL.</title>
        <authorList>
            <person name="Hohmann S."/>
            <person name="Gozalbo D."/>
        </authorList>
    </citation>
    <scope>NUCLEOTIDE SEQUENCE [GENOMIC DNA]</scope>
</reference>
<reference key="2">
    <citation type="submission" date="1986-11" db="EMBL/GenBank/DDBJ databases">
        <authorList>
            <person name="Sarokin L."/>
        </authorList>
    </citation>
    <scope>NUCLEOTIDE SEQUENCE [GENOMIC DNA] OF 1-30</scope>
</reference>
<proteinExistence type="inferred from homology"/>